<keyword id="KW-0238">DNA-binding</keyword>
<keyword id="KW-0489">Methyltransferase</keyword>
<keyword id="KW-1185">Reference proteome</keyword>
<keyword id="KW-0680">Restriction system</keyword>
<keyword id="KW-0949">S-adenosyl-L-methionine</keyword>
<keyword id="KW-0808">Transferase</keyword>
<gene>
    <name type="primary">dcm</name>
    <name type="ordered locus">Z3054</name>
    <name type="ordered locus">ECs2699</name>
</gene>
<feature type="chain" id="PRO_0000087914" description="DNA-cytosine methyltransferase">
    <location>
        <begin position="1"/>
        <end position="472"/>
    </location>
</feature>
<feature type="domain" description="SAM-dependent MTase C5-type" evidence="2">
    <location>
        <begin position="87"/>
        <end position="457"/>
    </location>
</feature>
<feature type="active site" evidence="2 3">
    <location>
        <position position="177"/>
    </location>
</feature>
<organism>
    <name type="scientific">Escherichia coli O157:H7</name>
    <dbReference type="NCBI Taxonomy" id="83334"/>
    <lineage>
        <taxon>Bacteria</taxon>
        <taxon>Pseudomonadati</taxon>
        <taxon>Pseudomonadota</taxon>
        <taxon>Gammaproteobacteria</taxon>
        <taxon>Enterobacterales</taxon>
        <taxon>Enterobacteriaceae</taxon>
        <taxon>Escherichia</taxon>
    </lineage>
</organism>
<sequence length="472" mass="53465">MQENISVTDSYSTGNAAQAMLEKLLQIYDVKTLVAQLNGVGENHWSAAILKRALANDSAWHRLSEKEFAHLQTLLPKPPAHHPHYAFRFIDLFAGIGGIRRGFESIGGQCVFTSEWNKHAVRTYKANHYCDPATHHFNEDIRDITLSHKEGVSDEAAAEHIRQHIPEHDVLLAGFPCQPFSLAGVSKKNSLGRAHGFACDTQGTLFFDVVRIIDARRPAMFVLENVKNLKSHDQGKTFRIIMQTLDELGYDVADAEDNGPDDPKIIDGKHFLPQHRERIVLVGFRRDLNLKADFTLRDISECFPAQRVTLAQLLDPMVEAKYILTPVLWKYLYRYAKKHQARGNGFGYGMVYPNNPQSVTRTLSARYYKDGAEILIDRGWDMATGEKDFDDPLNQQHRPRRLTPRECARLMGFEAPGEAKFRIPVSDTQAYRQFGNSVVVPVFAAVAKLLEPKIKQAVALRQQEAQHGRRSR</sequence>
<dbReference type="EC" id="2.1.1.37"/>
<dbReference type="EMBL" id="AE005174">
    <property type="protein sequence ID" value="AAG56975.1"/>
    <property type="molecule type" value="Genomic_DNA"/>
</dbReference>
<dbReference type="EMBL" id="BA000007">
    <property type="protein sequence ID" value="BAB36122.1"/>
    <property type="molecule type" value="Genomic_DNA"/>
</dbReference>
<dbReference type="PIR" id="C85814">
    <property type="entry name" value="C85814"/>
</dbReference>
<dbReference type="PIR" id="C90966">
    <property type="entry name" value="C90966"/>
</dbReference>
<dbReference type="RefSeq" id="NP_310726.1">
    <property type="nucleotide sequence ID" value="NC_002695.1"/>
</dbReference>
<dbReference type="RefSeq" id="WP_001157239.1">
    <property type="nucleotide sequence ID" value="NZ_VOAI01000028.1"/>
</dbReference>
<dbReference type="SMR" id="P0AEE0"/>
<dbReference type="STRING" id="155864.Z3054"/>
<dbReference type="REBASE" id="232038">
    <property type="entry name" value="M.Sen4024DcmP"/>
</dbReference>
<dbReference type="REBASE" id="232756">
    <property type="entry name" value="M.Sen4839DcmP"/>
</dbReference>
<dbReference type="REBASE" id="256726">
    <property type="entry name" value="M.Ssp9304ORF1801P"/>
</dbReference>
<dbReference type="REBASE" id="5031">
    <property type="entry name" value="M.EcoO157DcmP"/>
</dbReference>
<dbReference type="REBASE" id="5589">
    <property type="entry name" value="M.EcoKO157DcmP"/>
</dbReference>
<dbReference type="GeneID" id="86946876"/>
<dbReference type="GeneID" id="913056"/>
<dbReference type="KEGG" id="ece:Z3054"/>
<dbReference type="KEGG" id="ecs:ECs_2699"/>
<dbReference type="PATRIC" id="fig|386585.9.peg.2828"/>
<dbReference type="eggNOG" id="COG0270">
    <property type="taxonomic scope" value="Bacteria"/>
</dbReference>
<dbReference type="HOGENOM" id="CLU_006958_0_1_6"/>
<dbReference type="OMA" id="AGYRKGF"/>
<dbReference type="PRO" id="PR:P0AEE0"/>
<dbReference type="Proteomes" id="UP000000558">
    <property type="component" value="Chromosome"/>
</dbReference>
<dbReference type="Proteomes" id="UP000002519">
    <property type="component" value="Chromosome"/>
</dbReference>
<dbReference type="GO" id="GO:0003886">
    <property type="term" value="F:DNA (cytosine-5-)-methyltransferase activity"/>
    <property type="evidence" value="ECO:0007669"/>
    <property type="project" value="UniProtKB-EC"/>
</dbReference>
<dbReference type="GO" id="GO:0003677">
    <property type="term" value="F:DNA binding"/>
    <property type="evidence" value="ECO:0007669"/>
    <property type="project" value="UniProtKB-KW"/>
</dbReference>
<dbReference type="GO" id="GO:0009307">
    <property type="term" value="P:DNA restriction-modification system"/>
    <property type="evidence" value="ECO:0007669"/>
    <property type="project" value="UniProtKB-KW"/>
</dbReference>
<dbReference type="GO" id="GO:0032259">
    <property type="term" value="P:methylation"/>
    <property type="evidence" value="ECO:0007669"/>
    <property type="project" value="UniProtKB-KW"/>
</dbReference>
<dbReference type="GO" id="GO:0044027">
    <property type="term" value="P:negative regulation of gene expression via chromosomal CpG island methylation"/>
    <property type="evidence" value="ECO:0007669"/>
    <property type="project" value="TreeGrafter"/>
</dbReference>
<dbReference type="CDD" id="cd00315">
    <property type="entry name" value="Cyt_C5_DNA_methylase"/>
    <property type="match status" value="1"/>
</dbReference>
<dbReference type="FunFam" id="3.40.50.150:FF:000180">
    <property type="entry name" value="Cytosine-specific methyltransferase"/>
    <property type="match status" value="1"/>
</dbReference>
<dbReference type="Gene3D" id="1.10.260.140">
    <property type="match status" value="1"/>
</dbReference>
<dbReference type="Gene3D" id="3.90.120.30">
    <property type="match status" value="1"/>
</dbReference>
<dbReference type="Gene3D" id="3.40.50.150">
    <property type="entry name" value="Vaccinia Virus protein VP39"/>
    <property type="match status" value="1"/>
</dbReference>
<dbReference type="InterPro" id="IPR050390">
    <property type="entry name" value="C5-Methyltransferase"/>
</dbReference>
<dbReference type="InterPro" id="IPR018117">
    <property type="entry name" value="C5_DNA_meth_AS"/>
</dbReference>
<dbReference type="InterPro" id="IPR001525">
    <property type="entry name" value="C5_MeTfrase"/>
</dbReference>
<dbReference type="InterPro" id="IPR031303">
    <property type="entry name" value="C5_meth_CS"/>
</dbReference>
<dbReference type="InterPro" id="IPR040743">
    <property type="entry name" value="DNA_meth_N"/>
</dbReference>
<dbReference type="InterPro" id="IPR029063">
    <property type="entry name" value="SAM-dependent_MTases_sf"/>
</dbReference>
<dbReference type="NCBIfam" id="TIGR00675">
    <property type="entry name" value="dcm"/>
    <property type="match status" value="1"/>
</dbReference>
<dbReference type="NCBIfam" id="NF007772">
    <property type="entry name" value="PRK10458.1"/>
    <property type="match status" value="1"/>
</dbReference>
<dbReference type="PANTHER" id="PTHR10629">
    <property type="entry name" value="CYTOSINE-SPECIFIC METHYLTRANSFERASE"/>
    <property type="match status" value="1"/>
</dbReference>
<dbReference type="PANTHER" id="PTHR10629:SF52">
    <property type="entry name" value="DNA (CYTOSINE-5)-METHYLTRANSFERASE 1"/>
    <property type="match status" value="1"/>
</dbReference>
<dbReference type="Pfam" id="PF18284">
    <property type="entry name" value="DNA_meth_N"/>
    <property type="match status" value="1"/>
</dbReference>
<dbReference type="Pfam" id="PF00145">
    <property type="entry name" value="DNA_methylase"/>
    <property type="match status" value="1"/>
</dbReference>
<dbReference type="PRINTS" id="PR00105">
    <property type="entry name" value="C5METTRFRASE"/>
</dbReference>
<dbReference type="SUPFAM" id="SSF53335">
    <property type="entry name" value="S-adenosyl-L-methionine-dependent methyltransferases"/>
    <property type="match status" value="1"/>
</dbReference>
<dbReference type="PROSITE" id="PS00094">
    <property type="entry name" value="C5_MTASE_1"/>
    <property type="match status" value="1"/>
</dbReference>
<dbReference type="PROSITE" id="PS00095">
    <property type="entry name" value="C5_MTASE_2"/>
    <property type="match status" value="1"/>
</dbReference>
<dbReference type="PROSITE" id="PS51679">
    <property type="entry name" value="SAM_MT_C5"/>
    <property type="match status" value="1"/>
</dbReference>
<name>DCM_ECO57</name>
<proteinExistence type="inferred from homology"/>
<accession>P0AEE0</accession>
<accession>P11876</accession>
<protein>
    <recommendedName>
        <fullName>DNA-cytosine methyltransferase</fullName>
        <ecNumber>2.1.1.37</ecNumber>
    </recommendedName>
    <alternativeName>
        <fullName evidence="4">Probable type II methyltransferase M.Eco9331DcmP</fullName>
        <shortName evidence="4">M.Eco9331DcmP</shortName>
    </alternativeName>
</protein>
<comment type="function">
    <text evidence="1">This methylase recognizes the double-stranded sequence 5'-CCWGG-3', methylates C-2 on both strands.</text>
</comment>
<comment type="catalytic activity">
    <reaction evidence="3">
        <text>a 2'-deoxycytidine in DNA + S-adenosyl-L-methionine = a 5-methyl-2'-deoxycytidine in DNA + S-adenosyl-L-homocysteine + H(+)</text>
        <dbReference type="Rhea" id="RHEA:13681"/>
        <dbReference type="Rhea" id="RHEA-COMP:11369"/>
        <dbReference type="Rhea" id="RHEA-COMP:11370"/>
        <dbReference type="ChEBI" id="CHEBI:15378"/>
        <dbReference type="ChEBI" id="CHEBI:57856"/>
        <dbReference type="ChEBI" id="CHEBI:59789"/>
        <dbReference type="ChEBI" id="CHEBI:85452"/>
        <dbReference type="ChEBI" id="CHEBI:85454"/>
        <dbReference type="EC" id="2.1.1.37"/>
    </reaction>
</comment>
<comment type="similarity">
    <text evidence="2">Belongs to the class I-like SAM-binding methyltransferase superfamily. C5-methyltransferase family.</text>
</comment>
<reference key="1">
    <citation type="journal article" date="2001" name="Nature">
        <title>Genome sequence of enterohaemorrhagic Escherichia coli O157:H7.</title>
        <authorList>
            <person name="Perna N.T."/>
            <person name="Plunkett G. III"/>
            <person name="Burland V."/>
            <person name="Mau B."/>
            <person name="Glasner J.D."/>
            <person name="Rose D.J."/>
            <person name="Mayhew G.F."/>
            <person name="Evans P.S."/>
            <person name="Gregor J."/>
            <person name="Kirkpatrick H.A."/>
            <person name="Posfai G."/>
            <person name="Hackett J."/>
            <person name="Klink S."/>
            <person name="Boutin A."/>
            <person name="Shao Y."/>
            <person name="Miller L."/>
            <person name="Grotbeck E.J."/>
            <person name="Davis N.W."/>
            <person name="Lim A."/>
            <person name="Dimalanta E.T."/>
            <person name="Potamousis K."/>
            <person name="Apodaca J."/>
            <person name="Anantharaman T.S."/>
            <person name="Lin J."/>
            <person name="Yen G."/>
            <person name="Schwartz D.C."/>
            <person name="Welch R.A."/>
            <person name="Blattner F.R."/>
        </authorList>
    </citation>
    <scope>NUCLEOTIDE SEQUENCE [LARGE SCALE GENOMIC DNA]</scope>
    <source>
        <strain>O157:H7 / EDL933 / ATCC 700927 / EHEC</strain>
    </source>
</reference>
<reference key="2">
    <citation type="journal article" date="2001" name="DNA Res.">
        <title>Complete genome sequence of enterohemorrhagic Escherichia coli O157:H7 and genomic comparison with a laboratory strain K-12.</title>
        <authorList>
            <person name="Hayashi T."/>
            <person name="Makino K."/>
            <person name="Ohnishi M."/>
            <person name="Kurokawa K."/>
            <person name="Ishii K."/>
            <person name="Yokoyama K."/>
            <person name="Han C.-G."/>
            <person name="Ohtsubo E."/>
            <person name="Nakayama K."/>
            <person name="Murata T."/>
            <person name="Tanaka M."/>
            <person name="Tobe T."/>
            <person name="Iida T."/>
            <person name="Takami H."/>
            <person name="Honda T."/>
            <person name="Sasakawa C."/>
            <person name="Ogasawara N."/>
            <person name="Yasunaga T."/>
            <person name="Kuhara S."/>
            <person name="Shiba T."/>
            <person name="Hattori M."/>
            <person name="Shinagawa H."/>
        </authorList>
    </citation>
    <scope>NUCLEOTIDE SEQUENCE [LARGE SCALE GENOMIC DNA]</scope>
    <source>
        <strain>O157:H7 / Sakai / RIMD 0509952 / EHEC</strain>
    </source>
</reference>
<reference key="3">
    <citation type="journal article" date="2003" name="Nucleic Acids Res.">
        <title>A nomenclature for restriction enzymes, DNA methyltransferases, homing endonucleases and their genes.</title>
        <authorList>
            <person name="Roberts R.J."/>
            <person name="Belfort M."/>
            <person name="Bestor T."/>
            <person name="Bhagwat A.S."/>
            <person name="Bickle T.A."/>
            <person name="Bitinaite J."/>
            <person name="Blumenthal R.M."/>
            <person name="Degtyarev S.K."/>
            <person name="Dryden D.T."/>
            <person name="Dybvig K."/>
            <person name="Firman K."/>
            <person name="Gromova E.S."/>
            <person name="Gumport R.I."/>
            <person name="Halford S.E."/>
            <person name="Hattman S."/>
            <person name="Heitman J."/>
            <person name="Hornby D.P."/>
            <person name="Janulaitis A."/>
            <person name="Jeltsch A."/>
            <person name="Josephsen J."/>
            <person name="Kiss A."/>
            <person name="Klaenhammer T.R."/>
            <person name="Kobayashi I."/>
            <person name="Kong H."/>
            <person name="Krueger D.H."/>
            <person name="Lacks S."/>
            <person name="Marinus M.G."/>
            <person name="Miyahara M."/>
            <person name="Morgan R.D."/>
            <person name="Murray N.E."/>
            <person name="Nagaraja V."/>
            <person name="Piekarowicz A."/>
            <person name="Pingoud A."/>
            <person name="Raleigh E."/>
            <person name="Rao D.N."/>
            <person name="Reich N."/>
            <person name="Repin V.E."/>
            <person name="Selker E.U."/>
            <person name="Shaw P.C."/>
            <person name="Stein D.C."/>
            <person name="Stoddard B.L."/>
            <person name="Szybalski W."/>
            <person name="Trautner T.A."/>
            <person name="Van Etten J.L."/>
            <person name="Vitor J.M."/>
            <person name="Wilson G.G."/>
            <person name="Xu S.Y."/>
        </authorList>
    </citation>
    <scope>NOMENCLATURE</scope>
</reference>
<evidence type="ECO:0000250" key="1">
    <source>
        <dbReference type="UniProtKB" id="P0AED9"/>
    </source>
</evidence>
<evidence type="ECO:0000255" key="2">
    <source>
        <dbReference type="PROSITE-ProRule" id="PRU01016"/>
    </source>
</evidence>
<evidence type="ECO:0000255" key="3">
    <source>
        <dbReference type="PROSITE-ProRule" id="PRU10018"/>
    </source>
</evidence>
<evidence type="ECO:0000303" key="4">
    <source>
    </source>
</evidence>